<name>BP46_BPMU</name>
<accession>Q9T1V3</accession>
<dbReference type="EMBL" id="AF083977">
    <property type="protein sequence ID" value="AAF01124.1"/>
    <property type="molecule type" value="Genomic_DNA"/>
</dbReference>
<dbReference type="RefSeq" id="NP_050650.1">
    <property type="nucleotide sequence ID" value="NC_000929.1"/>
</dbReference>
<dbReference type="PDB" id="9KI1">
    <property type="method" value="EM"/>
    <property type="resolution" value="3.30 A"/>
    <property type="chains" value="A/B/C/D/E/F=1-145"/>
</dbReference>
<dbReference type="PDBsum" id="9KI1"/>
<dbReference type="EMDB" id="EMD-62362"/>
<dbReference type="SMR" id="Q9T1V3"/>
<dbReference type="GeneID" id="2636291"/>
<dbReference type="KEGG" id="vg:2636291"/>
<dbReference type="Proteomes" id="UP000002611">
    <property type="component" value="Genome"/>
</dbReference>
<dbReference type="GO" id="GO:0030430">
    <property type="term" value="C:host cell cytoplasm"/>
    <property type="evidence" value="ECO:0007669"/>
    <property type="project" value="UniProtKB-SubCell"/>
</dbReference>
<dbReference type="GO" id="GO:0098025">
    <property type="term" value="C:virus tail, baseplate"/>
    <property type="evidence" value="ECO:0007669"/>
    <property type="project" value="UniProtKB-KW"/>
</dbReference>
<dbReference type="GO" id="GO:0098003">
    <property type="term" value="P:viral tail assembly"/>
    <property type="evidence" value="ECO:0007669"/>
    <property type="project" value="UniProtKB-KW"/>
</dbReference>
<dbReference type="InterPro" id="IPR010877">
    <property type="entry name" value="Phage_Mu_Gp46"/>
</dbReference>
<dbReference type="Pfam" id="PF07409">
    <property type="entry name" value="GP46"/>
    <property type="match status" value="1"/>
</dbReference>
<gene>
    <name type="ordered locus">Mup46</name>
</gene>
<comment type="function">
    <text>Component of the baseplate. Probable connector between the central and peripheral parts of the baseplate. Probably involved in tail assembly.</text>
</comment>
<comment type="subunit">
    <text evidence="1">Part of a complex composed of three DNA circularization protein N, three baseplate hub protein gp44 and three sub-complex wedge (made of two copies of each baseplate protein gp46, gp47 and gp48) that forms the baseplate.</text>
</comment>
<comment type="subcellular location">
    <subcellularLocation>
        <location evidence="1">Virion</location>
    </subcellularLocation>
    <subcellularLocation>
        <location evidence="4">Host cytoplasm</location>
    </subcellularLocation>
    <text evidence="1">Baseplate protein.</text>
</comment>
<comment type="induction">
    <text evidence="3">Expressed in the late phase of the viral replicative cycle. Expression of late genes is activated by the viral late transcription activator C.</text>
</comment>
<comment type="disruption phenotype">
    <text evidence="2">No tail is synthesized.</text>
</comment>
<keyword id="KW-0002">3D-structure</keyword>
<keyword id="KW-1035">Host cytoplasm</keyword>
<keyword id="KW-0426">Late protein</keyword>
<keyword id="KW-1185">Reference proteome</keyword>
<keyword id="KW-1226">Viral baseplate protein</keyword>
<keyword id="KW-1188">Viral release from host cell</keyword>
<keyword id="KW-1245">Viral tail assembly</keyword>
<keyword id="KW-1227">Viral tail protein</keyword>
<keyword id="KW-0946">Virion</keyword>
<sequence length="145" mass="16323">MTDLAIIWTNGRGDIAQDGIDMLTDDSLTTDVTISLFTDRRALDSDTLPDGSDDRRGWWGDSYRDRPIGSRLWLLSREKATPDTLERARGYAEEALEWLKTAGRVSAINVRAEQLHQGWLYLYIALTLPDGSVIPYEFKAAFNGV</sequence>
<feature type="chain" id="PRO_0000077840" description="Baseplate protein gp46">
    <location>
        <begin position="1"/>
        <end position="145"/>
    </location>
</feature>
<evidence type="ECO:0000269" key="1">
    <source>
    </source>
</evidence>
<evidence type="ECO:0000269" key="2">
    <source>
    </source>
</evidence>
<evidence type="ECO:0000269" key="3">
    <source>
    </source>
</evidence>
<evidence type="ECO:0000305" key="4"/>
<proteinExistence type="evidence at protein level"/>
<reference key="1">
    <citation type="journal article" date="2002" name="J. Mol. Biol.">
        <title>Bacteriophage Mu genome sequence: analysis and comparison with Mu-like prophages in Haemophilus, Neisseria and Deinococcus.</title>
        <authorList>
            <person name="Morgan G.J."/>
            <person name="Hatfull G.F."/>
            <person name="Casjens S."/>
            <person name="Hendrix R.W."/>
        </authorList>
    </citation>
    <scope>NUCLEOTIDE SEQUENCE [LARGE SCALE GENOMIC DNA]</scope>
</reference>
<reference key="2">
    <citation type="journal article" date="1985" name="Virology">
        <title>Morphogenetic structures present in lysates of amber mutants of bacteriophage Mu.</title>
        <authorList>
            <person name="Grundy F.J."/>
            <person name="Howe M.M."/>
        </authorList>
    </citation>
    <scope>DISRUPTION PHENOTYPE</scope>
</reference>
<reference key="3">
    <citation type="journal article" date="1993" name="Genetics">
        <title>Mutational analysis of a C-dependent late promoter of bacteriophage Mu.</title>
        <authorList>
            <person name="Chiang L.W."/>
            <person name="Howe M.M."/>
        </authorList>
    </citation>
    <scope>INDUCTION</scope>
</reference>
<reference key="4">
    <citation type="journal article" date="2012" name="Adv. Exp. Med. Biol.">
        <title>Contractile tail machines of bacteriophages.</title>
        <authorList>
            <person name="Leiman P.G."/>
            <person name="Shneider M.M."/>
        </authorList>
    </citation>
    <scope>REVIEW</scope>
</reference>
<reference key="5">
    <citation type="journal article" date="2016" name="Proc. Natl. Acad. Sci. U.S.A.">
        <title>Baseplate assembly of phage Mu: Defining the conserved core components of contractile-tailed phages and related bacterial systems.</title>
        <authorList>
            <person name="Buettner C.R."/>
            <person name="Wu Y."/>
            <person name="Maxwell K.L."/>
            <person name="Davidson A.R."/>
        </authorList>
    </citation>
    <scope>SUBUNIT</scope>
    <scope>SUBCELLULAR LOCATION</scope>
</reference>
<protein>
    <recommendedName>
        <fullName>Baseplate protein gp46</fullName>
    </recommendedName>
    <alternativeName>
        <fullName>Gene product 46</fullName>
        <shortName>gp46</shortName>
    </alternativeName>
    <alternativeName>
        <fullName>Gene product V</fullName>
        <shortName>gpV</shortName>
    </alternativeName>
</protein>
<organismHost>
    <name type="scientific">Enterobacteriaceae</name>
    <dbReference type="NCBI Taxonomy" id="543"/>
</organismHost>
<organism>
    <name type="scientific">Escherichia phage Mu</name>
    <name type="common">Bacteriophage Mu</name>
    <dbReference type="NCBI Taxonomy" id="2681603"/>
    <lineage>
        <taxon>Viruses</taxon>
        <taxon>Duplodnaviria</taxon>
        <taxon>Heunggongvirae</taxon>
        <taxon>Uroviricota</taxon>
        <taxon>Caudoviricetes</taxon>
        <taxon>Muvirus</taxon>
        <taxon>Muvirus mu</taxon>
    </lineage>
</organism>